<keyword id="KW-1185">Reference proteome</keyword>
<organism>
    <name type="scientific">Dictyostelium discoideum</name>
    <name type="common">Social amoeba</name>
    <dbReference type="NCBI Taxonomy" id="44689"/>
    <lineage>
        <taxon>Eukaryota</taxon>
        <taxon>Amoebozoa</taxon>
        <taxon>Evosea</taxon>
        <taxon>Eumycetozoa</taxon>
        <taxon>Dictyostelia</taxon>
        <taxon>Dictyosteliales</taxon>
        <taxon>Dictyosteliaceae</taxon>
        <taxon>Dictyostelium</taxon>
    </lineage>
</organism>
<dbReference type="EMBL" id="AAFI02000082">
    <property type="protein sequence ID" value="EAL64468.1"/>
    <property type="molecule type" value="Genomic_DNA"/>
</dbReference>
<dbReference type="RefSeq" id="XP_637971.1">
    <property type="nucleotide sequence ID" value="XM_632879.1"/>
</dbReference>
<dbReference type="SMR" id="Q54ML9"/>
<dbReference type="PaxDb" id="44689-DDB0229938"/>
<dbReference type="EnsemblProtists" id="EAL64468">
    <property type="protein sequence ID" value="EAL64468"/>
    <property type="gene ID" value="DDB_G0285867"/>
</dbReference>
<dbReference type="GeneID" id="8625323"/>
<dbReference type="KEGG" id="ddi:DDB_G0285867"/>
<dbReference type="dictyBase" id="DDB_G0285867"/>
<dbReference type="HOGENOM" id="CLU_2908774_0_0_1"/>
<dbReference type="InParanoid" id="Q54ML9"/>
<dbReference type="PRO" id="PR:Q54ML9"/>
<dbReference type="Proteomes" id="UP000002195">
    <property type="component" value="Chromosome 4"/>
</dbReference>
<accession>Q54ML9</accession>
<proteinExistence type="evidence at transcript level"/>
<reference key="1">
    <citation type="journal article" date="2005" name="Nature">
        <title>The genome of the social amoeba Dictyostelium discoideum.</title>
        <authorList>
            <person name="Eichinger L."/>
            <person name="Pachebat J.A."/>
            <person name="Gloeckner G."/>
            <person name="Rajandream M.A."/>
            <person name="Sucgang R."/>
            <person name="Berriman M."/>
            <person name="Song J."/>
            <person name="Olsen R."/>
            <person name="Szafranski K."/>
            <person name="Xu Q."/>
            <person name="Tunggal B."/>
            <person name="Kummerfeld S."/>
            <person name="Madera M."/>
            <person name="Konfortov B.A."/>
            <person name="Rivero F."/>
            <person name="Bankier A.T."/>
            <person name="Lehmann R."/>
            <person name="Hamlin N."/>
            <person name="Davies R."/>
            <person name="Gaudet P."/>
            <person name="Fey P."/>
            <person name="Pilcher K."/>
            <person name="Chen G."/>
            <person name="Saunders D."/>
            <person name="Sodergren E.J."/>
            <person name="Davis P."/>
            <person name="Kerhornou A."/>
            <person name="Nie X."/>
            <person name="Hall N."/>
            <person name="Anjard C."/>
            <person name="Hemphill L."/>
            <person name="Bason N."/>
            <person name="Farbrother P."/>
            <person name="Desany B."/>
            <person name="Just E."/>
            <person name="Morio T."/>
            <person name="Rost R."/>
            <person name="Churcher C.M."/>
            <person name="Cooper J."/>
            <person name="Haydock S."/>
            <person name="van Driessche N."/>
            <person name="Cronin A."/>
            <person name="Goodhead I."/>
            <person name="Muzny D.M."/>
            <person name="Mourier T."/>
            <person name="Pain A."/>
            <person name="Lu M."/>
            <person name="Harper D."/>
            <person name="Lindsay R."/>
            <person name="Hauser H."/>
            <person name="James K.D."/>
            <person name="Quiles M."/>
            <person name="Madan Babu M."/>
            <person name="Saito T."/>
            <person name="Buchrieser C."/>
            <person name="Wardroper A."/>
            <person name="Felder M."/>
            <person name="Thangavelu M."/>
            <person name="Johnson D."/>
            <person name="Knights A."/>
            <person name="Loulseged H."/>
            <person name="Mungall K.L."/>
            <person name="Oliver K."/>
            <person name="Price C."/>
            <person name="Quail M.A."/>
            <person name="Urushihara H."/>
            <person name="Hernandez J."/>
            <person name="Rabbinowitsch E."/>
            <person name="Steffen D."/>
            <person name="Sanders M."/>
            <person name="Ma J."/>
            <person name="Kohara Y."/>
            <person name="Sharp S."/>
            <person name="Simmonds M.N."/>
            <person name="Spiegler S."/>
            <person name="Tivey A."/>
            <person name="Sugano S."/>
            <person name="White B."/>
            <person name="Walker D."/>
            <person name="Woodward J.R."/>
            <person name="Winckler T."/>
            <person name="Tanaka Y."/>
            <person name="Shaulsky G."/>
            <person name="Schleicher M."/>
            <person name="Weinstock G.M."/>
            <person name="Rosenthal A."/>
            <person name="Cox E.C."/>
            <person name="Chisholm R.L."/>
            <person name="Gibbs R.A."/>
            <person name="Loomis W.F."/>
            <person name="Platzer M."/>
            <person name="Kay R.R."/>
            <person name="Williams J.G."/>
            <person name="Dear P.H."/>
            <person name="Noegel A.A."/>
            <person name="Barrell B.G."/>
            <person name="Kuspa A."/>
        </authorList>
    </citation>
    <scope>NUCLEOTIDE SEQUENCE [LARGE SCALE GENOMIC DNA]</scope>
    <source>
        <strain>AX4</strain>
    </source>
</reference>
<reference key="2">
    <citation type="journal article" date="2003" name="Eukaryot. Cell">
        <title>Changing patterns of gene expression in Dictyostelium prestalk cell subtypes recognized by in situ hybridization with genes from microarray analyses.</title>
        <authorList>
            <person name="Maeda M."/>
            <person name="Sakamoto H."/>
            <person name="Iranfar N."/>
            <person name="Fuller D."/>
            <person name="Maruo T."/>
            <person name="Ogihara S."/>
            <person name="Morio T."/>
            <person name="Urushihara H."/>
            <person name="Tanaka Y."/>
            <person name="Loomis W.F."/>
        </authorList>
    </citation>
    <scope>DEVELOPMENTAL STAGE [LARGE SCALE ANALYSIS]</scope>
    <scope>INDUCTION</scope>
</reference>
<reference key="3">
    <citation type="journal article" date="2004" name="Int. J. Dev. Biol.">
        <title>Identification of new modes of Dd-STATa regulation of gene expression in Dictyostelium by in situ hybridisation.</title>
        <authorList>
            <person name="Shimada N."/>
            <person name="Maeda M."/>
            <person name="Urushihara H."/>
            <person name="Kawata T."/>
        </authorList>
    </citation>
    <scope>IDENTIFICATION</scope>
</reference>
<name>Y5867_DICDI</name>
<evidence type="ECO:0000269" key="1">
    <source>
    </source>
</evidence>
<feature type="chain" id="PRO_0000392662" description="Uncharacterized protein DDB_G0285867">
    <location>
        <begin position="1"/>
        <end position="62"/>
    </location>
</feature>
<sequence>MSIINTISKLSLSNSLKSNITIGNLNGTTVNNYTHNETSSKFTEFFTKSYNKTKDGFEKLKN</sequence>
<protein>
    <recommendedName>
        <fullName>Uncharacterized protein DDB_G0285867</fullName>
    </recommendedName>
</protein>
<gene>
    <name type="ORF">DDB_G0285867</name>
</gene>
<comment type="developmental stage">
    <text evidence="1">Expressed in prestalk pstO cells but not in pstA cells. Strongly expressed throughout development.</text>
</comment>
<comment type="induction">
    <text evidence="1">Down-regulated in dmtA-null cells.</text>
</comment>